<gene>
    <name type="ordered locus">At1g24881</name>
    <name type="ORF">F5A9.14</name>
</gene>
<name>FBK11_ARATH</name>
<comment type="sequence caution" evidence="1">
    <conflict type="erroneous gene model prediction">
        <sequence resource="EMBL-CDS" id="AAG03126"/>
    </conflict>
    <text>The predicted gene has been split into 2 genes: At1g24880 and At1g24881.</text>
</comment>
<proteinExistence type="predicted"/>
<sequence>MRRRRCDLQPKRTRMCDLQPKRTSMCDLPPKLVGEKILTRIPITSLRAVRSTCKLWNALTKDRVLGKAAAQFLGFMTMDSKVCSVRFHLRRSKEEEEDTMDLSIKQVDLLNQVEISRVYHCDGLLLCVAKDNSRVVVWNPYLGQTRWIRPRTESNIGDSYALGYDINRNHKILRMVQTRNVSVYRYEIYDLRSNSWRVLEVTPNGEMDPNHPLYGVSVKGNTYFFAHEDSSSGEIDEDGDIIDLEDFLLCFDFTTETFGLRLPLPFHSTIDATVTLSCVRDQQLAVLYHNEGLHSDDRFTTVEFWVTTSIEPNSVSWSKFLTVDMRPLALTGVRFDNDMGATFFIDEDEKVAVVFDLDGYLSTESARYHTAFISGKDGFFKPVTLGVAPNVGEPCPRTGHIPTTYRPPLVCSSTYLPSLVQVNQQRKRKERHV</sequence>
<keyword id="KW-0880">Kelch repeat</keyword>
<keyword id="KW-1185">Reference proteome</keyword>
<keyword id="KW-0677">Repeat</keyword>
<evidence type="ECO:0000305" key="1"/>
<dbReference type="EMBL" id="AC004133">
    <property type="protein sequence ID" value="AAG03126.1"/>
    <property type="status" value="ALT_SEQ"/>
    <property type="molecule type" value="Genomic_DNA"/>
</dbReference>
<dbReference type="EMBL" id="CP002684">
    <property type="protein sequence ID" value="AEE30571.1"/>
    <property type="molecule type" value="Genomic_DNA"/>
</dbReference>
<dbReference type="RefSeq" id="NP_001117347.1">
    <property type="nucleotide sequence ID" value="NM_001123875.2"/>
</dbReference>
<dbReference type="RefSeq" id="NP_001117348.1">
    <property type="nucleotide sequence ID" value="NM_001123876.1"/>
</dbReference>
<dbReference type="RefSeq" id="NP_001117350.1">
    <property type="nucleotide sequence ID" value="NM_001123878.4"/>
</dbReference>
<dbReference type="RefSeq" id="NP_001117352.1">
    <property type="nucleotide sequence ID" value="NM_001123880.1"/>
</dbReference>
<dbReference type="RefSeq" id="NP_001185091.1">
    <property type="nucleotide sequence ID" value="NM_001198162.2"/>
</dbReference>
<dbReference type="RefSeq" id="NP_001319077.1">
    <property type="nucleotide sequence ID" value="NM_001332666.1"/>
</dbReference>
<dbReference type="FunCoup" id="P0DI03">
    <property type="interactions" value="6"/>
</dbReference>
<dbReference type="EnsemblPlants" id="AT1G24800.1">
    <property type="protein sequence ID" value="AT1G24800.1"/>
    <property type="gene ID" value="AT1G24800"/>
</dbReference>
<dbReference type="EnsemblPlants" id="AT1G24881.1">
    <property type="protein sequence ID" value="AT1G24881.1"/>
    <property type="gene ID" value="AT1G24881"/>
</dbReference>
<dbReference type="EnsemblPlants" id="AT1G25055.1">
    <property type="protein sequence ID" value="AT1G25055.1"/>
    <property type="gene ID" value="AT1G25055"/>
</dbReference>
<dbReference type="EnsemblPlants" id="AT1G25150.1">
    <property type="protein sequence ID" value="AT1G25150.1"/>
    <property type="gene ID" value="AT1G25150"/>
</dbReference>
<dbReference type="EnsemblPlants" id="AT1G25150.2">
    <property type="protein sequence ID" value="AT1G25150.2"/>
    <property type="gene ID" value="AT1G25150"/>
</dbReference>
<dbReference type="EnsemblPlants" id="AT1G25211.1">
    <property type="protein sequence ID" value="AT1G25211.1"/>
    <property type="gene ID" value="AT1G25211"/>
</dbReference>
<dbReference type="GeneID" id="6241166"/>
<dbReference type="Gramene" id="AT1G24800.1">
    <property type="protein sequence ID" value="AT1G24800.1"/>
    <property type="gene ID" value="AT1G24800"/>
</dbReference>
<dbReference type="Gramene" id="AT1G24881.1">
    <property type="protein sequence ID" value="AT1G24881.1"/>
    <property type="gene ID" value="AT1G24881"/>
</dbReference>
<dbReference type="Gramene" id="AT1G25055.1">
    <property type="protein sequence ID" value="AT1G25055.1"/>
    <property type="gene ID" value="AT1G25055"/>
</dbReference>
<dbReference type="Gramene" id="AT1G25150.1">
    <property type="protein sequence ID" value="AT1G25150.1"/>
    <property type="gene ID" value="AT1G25150"/>
</dbReference>
<dbReference type="Gramene" id="AT1G25150.2">
    <property type="protein sequence ID" value="AT1G25150.2"/>
    <property type="gene ID" value="AT1G25150"/>
</dbReference>
<dbReference type="Gramene" id="AT1G25211.1">
    <property type="protein sequence ID" value="AT1G25211.1"/>
    <property type="gene ID" value="AT1G25211"/>
</dbReference>
<dbReference type="KEGG" id="ath:AT1G24800"/>
<dbReference type="KEGG" id="ath:AT1G24881"/>
<dbReference type="KEGG" id="ath:AT1G25055"/>
<dbReference type="KEGG" id="ath:AT1G25150"/>
<dbReference type="KEGG" id="ath:AT1G25211"/>
<dbReference type="Araport" id="AT1G24881"/>
<dbReference type="TAIR" id="AT1G24881"/>
<dbReference type="HOGENOM" id="CLU_034692_0_0_1"/>
<dbReference type="InParanoid" id="P0DI03"/>
<dbReference type="PhylomeDB" id="P0DI03"/>
<dbReference type="PRO" id="PR:P0DI03"/>
<dbReference type="Proteomes" id="UP000006548">
    <property type="component" value="Chromosome 1"/>
</dbReference>
<dbReference type="ExpressionAtlas" id="P0DI03">
    <property type="expression patterns" value="baseline"/>
</dbReference>
<dbReference type="InterPro" id="IPR006527">
    <property type="entry name" value="F-box-assoc_dom_typ1"/>
</dbReference>
<dbReference type="InterPro" id="IPR017451">
    <property type="entry name" value="F-box-assoc_interact_dom"/>
</dbReference>
<dbReference type="InterPro" id="IPR036047">
    <property type="entry name" value="F-box-like_dom_sf"/>
</dbReference>
<dbReference type="InterPro" id="IPR011043">
    <property type="entry name" value="Gal_Oxase/kelch_b-propeller"/>
</dbReference>
<dbReference type="InterPro" id="IPR050796">
    <property type="entry name" value="SCF_F-box_component"/>
</dbReference>
<dbReference type="NCBIfam" id="TIGR01640">
    <property type="entry name" value="F_box_assoc_1"/>
    <property type="match status" value="1"/>
</dbReference>
<dbReference type="PANTHER" id="PTHR31672">
    <property type="entry name" value="BNACNNG10540D PROTEIN"/>
    <property type="match status" value="1"/>
</dbReference>
<dbReference type="PANTHER" id="PTHR31672:SF13">
    <property type="entry name" value="F-BOX PROTEIN CPR30-LIKE"/>
    <property type="match status" value="1"/>
</dbReference>
<dbReference type="Pfam" id="PF07734">
    <property type="entry name" value="FBA_1"/>
    <property type="match status" value="1"/>
</dbReference>
<dbReference type="SUPFAM" id="SSF81383">
    <property type="entry name" value="F-box domain"/>
    <property type="match status" value="1"/>
</dbReference>
<dbReference type="SUPFAM" id="SSF50965">
    <property type="entry name" value="Galactose oxidase, central domain"/>
    <property type="match status" value="1"/>
</dbReference>
<accession>P0DI03</accession>
<accession>Q0WR04</accession>
<accession>Q56X62</accession>
<accession>Q56XG9</accession>
<accession>Q7GAV1</accession>
<accession>Q8GRJ5</accession>
<accession>Q8RXU7</accession>
<accession>Q9FE36</accession>
<accession>Q9FXK3</accession>
<accession>Q9FXK7</accession>
<feature type="chain" id="PRO_0000415913" description="F-box/kelch-repeat protein At1g24881">
    <location>
        <begin position="1"/>
        <end position="433"/>
    </location>
</feature>
<feature type="domain" description="F-box">
    <location>
        <begin position="23"/>
        <end position="71"/>
    </location>
</feature>
<feature type="repeat" description="Kelch 1">
    <location>
        <begin position="170"/>
        <end position="216"/>
    </location>
</feature>
<feature type="repeat" description="Kelch 2">
    <location>
        <begin position="286"/>
        <end position="337"/>
    </location>
</feature>
<reference key="1">
    <citation type="journal article" date="2000" name="Nature">
        <title>Sequence and analysis of chromosome 1 of the plant Arabidopsis thaliana.</title>
        <authorList>
            <person name="Theologis A."/>
            <person name="Ecker J.R."/>
            <person name="Palm C.J."/>
            <person name="Federspiel N.A."/>
            <person name="Kaul S."/>
            <person name="White O."/>
            <person name="Alonso J."/>
            <person name="Altafi H."/>
            <person name="Araujo R."/>
            <person name="Bowman C.L."/>
            <person name="Brooks S.Y."/>
            <person name="Buehler E."/>
            <person name="Chan A."/>
            <person name="Chao Q."/>
            <person name="Chen H."/>
            <person name="Cheuk R.F."/>
            <person name="Chin C.W."/>
            <person name="Chung M.K."/>
            <person name="Conn L."/>
            <person name="Conway A.B."/>
            <person name="Conway A.R."/>
            <person name="Creasy T.H."/>
            <person name="Dewar K."/>
            <person name="Dunn P."/>
            <person name="Etgu P."/>
            <person name="Feldblyum T.V."/>
            <person name="Feng J.-D."/>
            <person name="Fong B."/>
            <person name="Fujii C.Y."/>
            <person name="Gill J.E."/>
            <person name="Goldsmith A.D."/>
            <person name="Haas B."/>
            <person name="Hansen N.F."/>
            <person name="Hughes B."/>
            <person name="Huizar L."/>
            <person name="Hunter J.L."/>
            <person name="Jenkins J."/>
            <person name="Johnson-Hopson C."/>
            <person name="Khan S."/>
            <person name="Khaykin E."/>
            <person name="Kim C.J."/>
            <person name="Koo H.L."/>
            <person name="Kremenetskaia I."/>
            <person name="Kurtz D.B."/>
            <person name="Kwan A."/>
            <person name="Lam B."/>
            <person name="Langin-Hooper S."/>
            <person name="Lee A."/>
            <person name="Lee J.M."/>
            <person name="Lenz C.A."/>
            <person name="Li J.H."/>
            <person name="Li Y.-P."/>
            <person name="Lin X."/>
            <person name="Liu S.X."/>
            <person name="Liu Z.A."/>
            <person name="Luros J.S."/>
            <person name="Maiti R."/>
            <person name="Marziali A."/>
            <person name="Militscher J."/>
            <person name="Miranda M."/>
            <person name="Nguyen M."/>
            <person name="Nierman W.C."/>
            <person name="Osborne B.I."/>
            <person name="Pai G."/>
            <person name="Peterson J."/>
            <person name="Pham P.K."/>
            <person name="Rizzo M."/>
            <person name="Rooney T."/>
            <person name="Rowley D."/>
            <person name="Sakano H."/>
            <person name="Salzberg S.L."/>
            <person name="Schwartz J.R."/>
            <person name="Shinn P."/>
            <person name="Southwick A.M."/>
            <person name="Sun H."/>
            <person name="Tallon L.J."/>
            <person name="Tambunga G."/>
            <person name="Toriumi M.J."/>
            <person name="Town C.D."/>
            <person name="Utterback T."/>
            <person name="Van Aken S."/>
            <person name="Vaysberg M."/>
            <person name="Vysotskaia V.S."/>
            <person name="Walker M."/>
            <person name="Wu D."/>
            <person name="Yu G."/>
            <person name="Fraser C.M."/>
            <person name="Venter J.C."/>
            <person name="Davis R.W."/>
        </authorList>
    </citation>
    <scope>NUCLEOTIDE SEQUENCE [LARGE SCALE GENOMIC DNA]</scope>
    <source>
        <strain>cv. Columbia</strain>
    </source>
</reference>
<reference key="2">
    <citation type="journal article" date="2017" name="Plant J.">
        <title>Araport11: a complete reannotation of the Arabidopsis thaliana reference genome.</title>
        <authorList>
            <person name="Cheng C.Y."/>
            <person name="Krishnakumar V."/>
            <person name="Chan A.P."/>
            <person name="Thibaud-Nissen F."/>
            <person name="Schobel S."/>
            <person name="Town C.D."/>
        </authorList>
    </citation>
    <scope>GENOME REANNOTATION</scope>
    <source>
        <strain>cv. Columbia</strain>
    </source>
</reference>
<protein>
    <recommendedName>
        <fullName>F-box/kelch-repeat protein At1g24881</fullName>
    </recommendedName>
</protein>
<organism>
    <name type="scientific">Arabidopsis thaliana</name>
    <name type="common">Mouse-ear cress</name>
    <dbReference type="NCBI Taxonomy" id="3702"/>
    <lineage>
        <taxon>Eukaryota</taxon>
        <taxon>Viridiplantae</taxon>
        <taxon>Streptophyta</taxon>
        <taxon>Embryophyta</taxon>
        <taxon>Tracheophyta</taxon>
        <taxon>Spermatophyta</taxon>
        <taxon>Magnoliopsida</taxon>
        <taxon>eudicotyledons</taxon>
        <taxon>Gunneridae</taxon>
        <taxon>Pentapetalae</taxon>
        <taxon>rosids</taxon>
        <taxon>malvids</taxon>
        <taxon>Brassicales</taxon>
        <taxon>Brassicaceae</taxon>
        <taxon>Camelineae</taxon>
        <taxon>Arabidopsis</taxon>
    </lineage>
</organism>